<comment type="function">
    <text evidence="1 2 7">Inhibits amyloid precursor protein processing, probably by blocking BACE1 activity (By similarity). Enhances trafficking of the glutamate transporter SLC1A1/EAAC1 from the endoplasmic reticulum to the cell surface (PubMed:18096700). Plays a role in the translocation of SLC2A4/GLUT4 from intracellular membranes to the cell membrane which facilitates the uptake of glucose into the cell (By similarity).</text>
</comment>
<comment type="subunit">
    <text evidence="2 7">Interacts with SPAST (By similarity). Interacts with BACE1 (By similarity). Interacts (via first transmembrane domain) with ARL6IP5/GTRAP3-18 (PubMed:18096700). Interacts (via N-terminus) with SLC1A1/EAAC1; the interaction promotes cell surface expression of SLC1A1 (PubMed:18096700).</text>
</comment>
<comment type="subcellular location">
    <subcellularLocation>
        <location evidence="5 7">Endoplasmic reticulum membrane</location>
        <topology evidence="5">Multi-pass membrane protein</topology>
    </subcellularLocation>
    <subcellularLocation>
        <location evidence="1">Sarcoplasmic reticulum membrane</location>
        <topology evidence="3">Multi-pass membrane protein</topology>
    </subcellularLocation>
    <subcellularLocation>
        <location evidence="7">Cell membrane</location>
        <topology evidence="3">Multi-pass membrane protein</topology>
    </subcellularLocation>
    <subcellularLocation>
        <location evidence="1">Cell membrane</location>
        <location evidence="1">Sarcolemma</location>
        <topology evidence="3">Multi-pass membrane protein</topology>
    </subcellularLocation>
    <subcellularLocation>
        <location evidence="1">Cell membrane</location>
        <location evidence="1">Sarcolemma</location>
        <location evidence="1">T-tubule</location>
        <topology evidence="3">Multi-pass membrane protein</topology>
    </subcellularLocation>
    <subcellularLocation>
        <location evidence="1">Cytoplasm</location>
        <location evidence="1">Myofibril</location>
        <location evidence="1">Sarcomere</location>
        <location evidence="1">Z line</location>
    </subcellularLocation>
    <subcellularLocation>
        <location evidence="1">Cytoplasm</location>
        <location evidence="1">Cytoskeleton</location>
    </subcellularLocation>
    <text evidence="1">Localizes to intermediate filaments in mononucleated myoblasts and to Z lines in mature myotubes.</text>
</comment>
<comment type="tissue specificity">
    <text evidence="7">Expressed in brain and spinal cord (at protein level) (PubMed:18096700). In the embryonic brain cortex, expressed in neurons but not in astrocytes (at protein level) (PubMed:18096700).</text>
</comment>
<evidence type="ECO:0000250" key="1">
    <source>
        <dbReference type="UniProtKB" id="O70622"/>
    </source>
</evidence>
<evidence type="ECO:0000250" key="2">
    <source>
        <dbReference type="UniProtKB" id="O75298"/>
    </source>
</evidence>
<evidence type="ECO:0000255" key="3"/>
<evidence type="ECO:0000255" key="4">
    <source>
        <dbReference type="PROSITE-ProRule" id="PRU00170"/>
    </source>
</evidence>
<evidence type="ECO:0000255" key="5">
    <source>
        <dbReference type="RuleBase" id="RU210713"/>
    </source>
</evidence>
<evidence type="ECO:0000256" key="6">
    <source>
        <dbReference type="SAM" id="MobiDB-lite"/>
    </source>
</evidence>
<evidence type="ECO:0000269" key="7">
    <source>
    </source>
</evidence>
<evidence type="ECO:0000305" key="8"/>
<evidence type="ECO:0000312" key="9">
    <source>
        <dbReference type="EMBL" id="AAI29080.1"/>
    </source>
</evidence>
<evidence type="ECO:0000312" key="10">
    <source>
        <dbReference type="EMBL" id="AAQ18231.1"/>
    </source>
</evidence>
<evidence type="ECO:0000312" key="11">
    <source>
        <dbReference type="EMBL" id="DAA01961.2"/>
    </source>
</evidence>
<evidence type="ECO:0000312" key="12">
    <source>
        <dbReference type="Proteomes" id="UP000002494"/>
    </source>
</evidence>
<evidence type="ECO:0000312" key="13">
    <source>
        <dbReference type="RGD" id="1303245"/>
    </source>
</evidence>
<evidence type="ECO:0007744" key="14">
    <source>
    </source>
</evidence>
<accession>Q6WN19</accession>
<accession>F1LM00</accession>
<organism evidence="10">
    <name type="scientific">Rattus norvegicus</name>
    <name type="common">Rat</name>
    <dbReference type="NCBI Taxonomy" id="10116"/>
    <lineage>
        <taxon>Eukaryota</taxon>
        <taxon>Metazoa</taxon>
        <taxon>Chordata</taxon>
        <taxon>Craniata</taxon>
        <taxon>Vertebrata</taxon>
        <taxon>Euteleostomi</taxon>
        <taxon>Mammalia</taxon>
        <taxon>Eutheria</taxon>
        <taxon>Euarchontoglires</taxon>
        <taxon>Glires</taxon>
        <taxon>Rodentia</taxon>
        <taxon>Myomorpha</taxon>
        <taxon>Muroidea</taxon>
        <taxon>Muridae</taxon>
        <taxon>Murinae</taxon>
        <taxon>Rattus</taxon>
    </lineage>
</organism>
<name>RTN2_RAT</name>
<feature type="chain" id="PRO_0000452174" description="Reticulon-2">
    <location>
        <begin position="1"/>
        <end position="469"/>
    </location>
</feature>
<feature type="transmembrane region" description="Helical" evidence="3">
    <location>
        <begin position="293"/>
        <end position="313"/>
    </location>
</feature>
<feature type="transmembrane region" description="Helical" evidence="3">
    <location>
        <begin position="388"/>
        <end position="408"/>
    </location>
</feature>
<feature type="domain" description="Reticulon" evidence="4">
    <location>
        <begin position="270"/>
        <end position="469"/>
    </location>
</feature>
<feature type="region of interest" description="Disordered" evidence="6">
    <location>
        <begin position="1"/>
        <end position="180"/>
    </location>
</feature>
<feature type="region of interest" description="Disordered" evidence="6">
    <location>
        <begin position="201"/>
        <end position="238"/>
    </location>
</feature>
<feature type="compositionally biased region" description="Low complexity" evidence="6">
    <location>
        <begin position="14"/>
        <end position="25"/>
    </location>
</feature>
<feature type="compositionally biased region" description="Basic and acidic residues" evidence="6">
    <location>
        <begin position="32"/>
        <end position="43"/>
    </location>
</feature>
<feature type="compositionally biased region" description="Basic and acidic residues" evidence="6">
    <location>
        <begin position="135"/>
        <end position="144"/>
    </location>
</feature>
<feature type="compositionally biased region" description="Polar residues" evidence="6">
    <location>
        <begin position="159"/>
        <end position="168"/>
    </location>
</feature>
<feature type="compositionally biased region" description="Polar residues" evidence="6">
    <location>
        <begin position="203"/>
        <end position="226"/>
    </location>
</feature>
<feature type="modified residue" description="Phosphoserine" evidence="1">
    <location>
        <position position="44"/>
    </location>
</feature>
<gene>
    <name evidence="13" type="primary">Rtn2</name>
    <name evidence="1" type="synonym">Nspl1</name>
</gene>
<dbReference type="EMBL" id="AY279211">
    <property type="protein sequence ID" value="AAQ18231.1"/>
    <property type="molecule type" value="mRNA"/>
</dbReference>
<dbReference type="EMBL" id="AABR07002674">
    <property type="status" value="NOT_ANNOTATED_CDS"/>
    <property type="molecule type" value="Genomic_DNA"/>
</dbReference>
<dbReference type="EMBL" id="BC129079">
    <property type="protein sequence ID" value="AAI29080.1"/>
    <property type="molecule type" value="mRNA"/>
</dbReference>
<dbReference type="EMBL" id="BK001788">
    <property type="protein sequence ID" value="DAA01961.2"/>
    <property type="molecule type" value="mRNA"/>
</dbReference>
<dbReference type="RefSeq" id="NP_963856.1">
    <property type="nucleotide sequence ID" value="NM_201562.3"/>
</dbReference>
<dbReference type="SMR" id="Q6WN19"/>
<dbReference type="FunCoup" id="Q6WN19">
    <property type="interactions" value="319"/>
</dbReference>
<dbReference type="STRING" id="10116.ENSRNOP00000022528"/>
<dbReference type="iPTMnet" id="Q6WN19"/>
<dbReference type="PhosphoSitePlus" id="Q6WN19"/>
<dbReference type="PaxDb" id="10116-ENSRNOP00000022528"/>
<dbReference type="Ensembl" id="ENSRNOT00000022528.7">
    <property type="protein sequence ID" value="ENSRNOP00000022528.5"/>
    <property type="gene ID" value="ENSRNOG00000016603.7"/>
</dbReference>
<dbReference type="GeneID" id="308410"/>
<dbReference type="KEGG" id="rno:308410"/>
<dbReference type="UCSC" id="RGD:1303245">
    <property type="organism name" value="rat"/>
</dbReference>
<dbReference type="AGR" id="RGD:1303245"/>
<dbReference type="CTD" id="6253"/>
<dbReference type="RGD" id="1303245">
    <property type="gene designation" value="Rtn2"/>
</dbReference>
<dbReference type="eggNOG" id="KOG1792">
    <property type="taxonomic scope" value="Eukaryota"/>
</dbReference>
<dbReference type="GeneTree" id="ENSGT00940000160599"/>
<dbReference type="HOGENOM" id="CLU_508939_0_0_1"/>
<dbReference type="InParanoid" id="Q6WN19"/>
<dbReference type="OrthoDB" id="567788at2759"/>
<dbReference type="PhylomeDB" id="Q6WN19"/>
<dbReference type="TreeFam" id="TF105431"/>
<dbReference type="PRO" id="PR:Q6WN19"/>
<dbReference type="Proteomes" id="UP000002494">
    <property type="component" value="Chromosome 1"/>
</dbReference>
<dbReference type="Bgee" id="ENSRNOG00000016603">
    <property type="expression patterns" value="Expressed in skeletal muscle tissue and 19 other cell types or tissues"/>
</dbReference>
<dbReference type="GO" id="GO:0009986">
    <property type="term" value="C:cell surface"/>
    <property type="evidence" value="ECO:0000314"/>
    <property type="project" value="UniProtKB"/>
</dbReference>
<dbReference type="GO" id="GO:0005783">
    <property type="term" value="C:endoplasmic reticulum"/>
    <property type="evidence" value="ECO:0000314"/>
    <property type="project" value="UniProtKB"/>
</dbReference>
<dbReference type="GO" id="GO:0005789">
    <property type="term" value="C:endoplasmic reticulum membrane"/>
    <property type="evidence" value="ECO:0000318"/>
    <property type="project" value="GO_Central"/>
</dbReference>
<dbReference type="GO" id="GO:0005882">
    <property type="term" value="C:intermediate filament"/>
    <property type="evidence" value="ECO:0000250"/>
    <property type="project" value="UniProtKB"/>
</dbReference>
<dbReference type="GO" id="GO:0043005">
    <property type="term" value="C:neuron projection"/>
    <property type="evidence" value="ECO:0000318"/>
    <property type="project" value="GO_Central"/>
</dbReference>
<dbReference type="GO" id="GO:0014069">
    <property type="term" value="C:postsynaptic density"/>
    <property type="evidence" value="ECO:0000318"/>
    <property type="project" value="GO_Central"/>
</dbReference>
<dbReference type="GO" id="GO:0033017">
    <property type="term" value="C:sarcoplasmic reticulum membrane"/>
    <property type="evidence" value="ECO:0007669"/>
    <property type="project" value="UniProtKB-SubCell"/>
</dbReference>
<dbReference type="GO" id="GO:0030315">
    <property type="term" value="C:T-tubule"/>
    <property type="evidence" value="ECO:0000250"/>
    <property type="project" value="UniProtKB"/>
</dbReference>
<dbReference type="GO" id="GO:0014802">
    <property type="term" value="C:terminal cisterna"/>
    <property type="evidence" value="ECO:0000250"/>
    <property type="project" value="UniProtKB"/>
</dbReference>
<dbReference type="GO" id="GO:0030018">
    <property type="term" value="C:Z disc"/>
    <property type="evidence" value="ECO:0000250"/>
    <property type="project" value="UniProtKB"/>
</dbReference>
<dbReference type="GO" id="GO:0007420">
    <property type="term" value="P:brain development"/>
    <property type="evidence" value="ECO:0000318"/>
    <property type="project" value="GO_Central"/>
</dbReference>
<dbReference type="GO" id="GO:0071787">
    <property type="term" value="P:endoplasmic reticulum tubular network formation"/>
    <property type="evidence" value="ECO:0000318"/>
    <property type="project" value="GO_Central"/>
</dbReference>
<dbReference type="GO" id="GO:0010467">
    <property type="term" value="P:gene expression"/>
    <property type="evidence" value="ECO:0000266"/>
    <property type="project" value="RGD"/>
</dbReference>
<dbReference type="GO" id="GO:0065002">
    <property type="term" value="P:intracellular protein transmembrane transport"/>
    <property type="evidence" value="ECO:0000250"/>
    <property type="project" value="UniProtKB"/>
</dbReference>
<dbReference type="GO" id="GO:1902430">
    <property type="term" value="P:negative regulation of amyloid-beta formation"/>
    <property type="evidence" value="ECO:0000250"/>
    <property type="project" value="UniProtKB"/>
</dbReference>
<dbReference type="GO" id="GO:0030182">
    <property type="term" value="P:neuron differentiation"/>
    <property type="evidence" value="ECO:0000318"/>
    <property type="project" value="GO_Central"/>
</dbReference>
<dbReference type="GO" id="GO:0015031">
    <property type="term" value="P:protein transport"/>
    <property type="evidence" value="ECO:0000314"/>
    <property type="project" value="MGI"/>
</dbReference>
<dbReference type="GO" id="GO:0046324">
    <property type="term" value="P:regulation of D-glucose import"/>
    <property type="evidence" value="ECO:0000250"/>
    <property type="project" value="UniProtKB"/>
</dbReference>
<dbReference type="FunFam" id="1.20.5.2480:FF:000001">
    <property type="entry name" value="Reticulon"/>
    <property type="match status" value="1"/>
</dbReference>
<dbReference type="Gene3D" id="1.20.5.2480">
    <property type="match status" value="1"/>
</dbReference>
<dbReference type="InterPro" id="IPR003388">
    <property type="entry name" value="Reticulon"/>
</dbReference>
<dbReference type="InterPro" id="IPR046964">
    <property type="entry name" value="RTN1-4"/>
</dbReference>
<dbReference type="PANTHER" id="PTHR45799:SF3">
    <property type="entry name" value="RETICULON-2"/>
    <property type="match status" value="1"/>
</dbReference>
<dbReference type="PANTHER" id="PTHR45799">
    <property type="entry name" value="RETICULON-LIKE PROTEIN"/>
    <property type="match status" value="1"/>
</dbReference>
<dbReference type="Pfam" id="PF02453">
    <property type="entry name" value="Reticulon"/>
    <property type="match status" value="1"/>
</dbReference>
<dbReference type="PROSITE" id="PS50845">
    <property type="entry name" value="RETICULON"/>
    <property type="match status" value="1"/>
</dbReference>
<sequence>MGQVLPVFAHCKEAPSTASSTPDSTEGGNDDSDFRELHTAREFSEDEEEETTSQDWGTPRELTFSYIAFDGVVGSGGRRDSVVRRPRPQGRSVSEPRDPPPQPSLGDSLESIPSLSQSPEPGRRGDPDTVPPAERPLEELRLRLDQLGWAVRSAGSGEDSATSSSTPLENEEPDGLEASEAGETNLELRLAQPLHLQFEGLTPQLSPSSGIPQAHTPSPQRSQDLNTGPDEPLPNGEGEHWRLLEQEPITAQCLNSTDQSEFTLEPLLLVADLLYWKDTRTSGAIFTGLMASLLCLLHFSIVSVAAHLALLGLCATISLRVYRKVLQAVHRGDGTNPFQAYLDMDLTLTREQTERLSQQIASHVVSTATQLRHFFLVEDLVDSLKLALLFYILTFVGAIFNGLTLVILGVVALFTVPLLYRQHQAQIDQYVGLVTSQLSHIKAKIRAKIPGTGTLAPAASVSGSKAKAE</sequence>
<protein>
    <recommendedName>
        <fullName evidence="13">Reticulon-2</fullName>
    </recommendedName>
    <alternativeName>
        <fullName evidence="1">Neuroendocrine-specific protein-like 1</fullName>
        <shortName evidence="1">NSP-like protein 1</shortName>
    </alternativeName>
    <alternativeName>
        <fullName evidence="8">Neuroendocrine-specific protein-like I</fullName>
        <shortName evidence="8">NSP-like protein I</shortName>
        <shortName evidence="8">NSPLI</shortName>
    </alternativeName>
</protein>
<reference evidence="10" key="1">
    <citation type="submission" date="2003-04" db="EMBL/GenBank/DDBJ databases">
        <authorList>
            <person name="Vidensky S.O."/>
            <person name="Ruggiero A.M."/>
            <person name="Rothstein J.D."/>
        </authorList>
    </citation>
    <scope>NUCLEOTIDE SEQUENCE [MRNA]</scope>
</reference>
<reference evidence="12" key="2">
    <citation type="journal article" date="2004" name="Nature">
        <title>Genome sequence of the Brown Norway rat yields insights into mammalian evolution.</title>
        <authorList>
            <person name="Gibbs R.A."/>
            <person name="Weinstock G.M."/>
            <person name="Metzker M.L."/>
            <person name="Muzny D.M."/>
            <person name="Sodergren E.J."/>
            <person name="Scherer S."/>
            <person name="Scott G."/>
            <person name="Steffen D."/>
            <person name="Worley K.C."/>
            <person name="Burch P.E."/>
            <person name="Okwuonu G."/>
            <person name="Hines S."/>
            <person name="Lewis L."/>
            <person name="Deramo C."/>
            <person name="Delgado O."/>
            <person name="Dugan-Rocha S."/>
            <person name="Miner G."/>
            <person name="Morgan M."/>
            <person name="Hawes A."/>
            <person name="Gill R."/>
            <person name="Holt R.A."/>
            <person name="Adams M.D."/>
            <person name="Amanatides P.G."/>
            <person name="Baden-Tillson H."/>
            <person name="Barnstead M."/>
            <person name="Chin S."/>
            <person name="Evans C.A."/>
            <person name="Ferriera S."/>
            <person name="Fosler C."/>
            <person name="Glodek A."/>
            <person name="Gu Z."/>
            <person name="Jennings D."/>
            <person name="Kraft C.L."/>
            <person name="Nguyen T."/>
            <person name="Pfannkoch C.M."/>
            <person name="Sitter C."/>
            <person name="Sutton G.G."/>
            <person name="Venter J.C."/>
            <person name="Woodage T."/>
            <person name="Smith D."/>
            <person name="Lee H.-M."/>
            <person name="Gustafson E."/>
            <person name="Cahill P."/>
            <person name="Kana A."/>
            <person name="Doucette-Stamm L."/>
            <person name="Weinstock K."/>
            <person name="Fechtel K."/>
            <person name="Weiss R.B."/>
            <person name="Dunn D.M."/>
            <person name="Green E.D."/>
            <person name="Blakesley R.W."/>
            <person name="Bouffard G.G."/>
            <person name="De Jong P.J."/>
            <person name="Osoegawa K."/>
            <person name="Zhu B."/>
            <person name="Marra M."/>
            <person name="Schein J."/>
            <person name="Bosdet I."/>
            <person name="Fjell C."/>
            <person name="Jones S."/>
            <person name="Krzywinski M."/>
            <person name="Mathewson C."/>
            <person name="Siddiqui A."/>
            <person name="Wye N."/>
            <person name="McPherson J."/>
            <person name="Zhao S."/>
            <person name="Fraser C.M."/>
            <person name="Shetty J."/>
            <person name="Shatsman S."/>
            <person name="Geer K."/>
            <person name="Chen Y."/>
            <person name="Abramzon S."/>
            <person name="Nierman W.C."/>
            <person name="Havlak P.H."/>
            <person name="Chen R."/>
            <person name="Durbin K.J."/>
            <person name="Egan A."/>
            <person name="Ren Y."/>
            <person name="Song X.-Z."/>
            <person name="Li B."/>
            <person name="Liu Y."/>
            <person name="Qin X."/>
            <person name="Cawley S."/>
            <person name="Cooney A.J."/>
            <person name="D'Souza L.M."/>
            <person name="Martin K."/>
            <person name="Wu J.Q."/>
            <person name="Gonzalez-Garay M.L."/>
            <person name="Jackson A.R."/>
            <person name="Kalafus K.J."/>
            <person name="McLeod M.P."/>
            <person name="Milosavljevic A."/>
            <person name="Virk D."/>
            <person name="Volkov A."/>
            <person name="Wheeler D.A."/>
            <person name="Zhang Z."/>
            <person name="Bailey J.A."/>
            <person name="Eichler E.E."/>
            <person name="Tuzun E."/>
            <person name="Birney E."/>
            <person name="Mongin E."/>
            <person name="Ureta-Vidal A."/>
            <person name="Woodwark C."/>
            <person name="Zdobnov E."/>
            <person name="Bork P."/>
            <person name="Suyama M."/>
            <person name="Torrents D."/>
            <person name="Alexandersson M."/>
            <person name="Trask B.J."/>
            <person name="Young J.M."/>
            <person name="Huang H."/>
            <person name="Wang H."/>
            <person name="Xing H."/>
            <person name="Daniels S."/>
            <person name="Gietzen D."/>
            <person name="Schmidt J."/>
            <person name="Stevens K."/>
            <person name="Vitt U."/>
            <person name="Wingrove J."/>
            <person name="Camara F."/>
            <person name="Mar Alba M."/>
            <person name="Abril J.F."/>
            <person name="Guigo R."/>
            <person name="Smit A."/>
            <person name="Dubchak I."/>
            <person name="Rubin E.M."/>
            <person name="Couronne O."/>
            <person name="Poliakov A."/>
            <person name="Huebner N."/>
            <person name="Ganten D."/>
            <person name="Goesele C."/>
            <person name="Hummel O."/>
            <person name="Kreitler T."/>
            <person name="Lee Y.-A."/>
            <person name="Monti J."/>
            <person name="Schulz H."/>
            <person name="Zimdahl H."/>
            <person name="Himmelbauer H."/>
            <person name="Lehrach H."/>
            <person name="Jacob H.J."/>
            <person name="Bromberg S."/>
            <person name="Gullings-Handley J."/>
            <person name="Jensen-Seaman M.I."/>
            <person name="Kwitek A.E."/>
            <person name="Lazar J."/>
            <person name="Pasko D."/>
            <person name="Tonellato P.J."/>
            <person name="Twigger S."/>
            <person name="Ponting C.P."/>
            <person name="Duarte J.M."/>
            <person name="Rice S."/>
            <person name="Goodstadt L."/>
            <person name="Beatson S.A."/>
            <person name="Emes R.D."/>
            <person name="Winter E.E."/>
            <person name="Webber C."/>
            <person name="Brandt P."/>
            <person name="Nyakatura G."/>
            <person name="Adetobi M."/>
            <person name="Chiaromonte F."/>
            <person name="Elnitski L."/>
            <person name="Eswara P."/>
            <person name="Hardison R.C."/>
            <person name="Hou M."/>
            <person name="Kolbe D."/>
            <person name="Makova K."/>
            <person name="Miller W."/>
            <person name="Nekrutenko A."/>
            <person name="Riemer C."/>
            <person name="Schwartz S."/>
            <person name="Taylor J."/>
            <person name="Yang S."/>
            <person name="Zhang Y."/>
            <person name="Lindpaintner K."/>
            <person name="Andrews T.D."/>
            <person name="Caccamo M."/>
            <person name="Clamp M."/>
            <person name="Clarke L."/>
            <person name="Curwen V."/>
            <person name="Durbin R.M."/>
            <person name="Eyras E."/>
            <person name="Searle S.M."/>
            <person name="Cooper G.M."/>
            <person name="Batzoglou S."/>
            <person name="Brudno M."/>
            <person name="Sidow A."/>
            <person name="Stone E.A."/>
            <person name="Payseur B.A."/>
            <person name="Bourque G."/>
            <person name="Lopez-Otin C."/>
            <person name="Puente X.S."/>
            <person name="Chakrabarti K."/>
            <person name="Chatterji S."/>
            <person name="Dewey C."/>
            <person name="Pachter L."/>
            <person name="Bray N."/>
            <person name="Yap V.B."/>
            <person name="Caspi A."/>
            <person name="Tesler G."/>
            <person name="Pevzner P.A."/>
            <person name="Haussler D."/>
            <person name="Roskin K.M."/>
            <person name="Baertsch R."/>
            <person name="Clawson H."/>
            <person name="Furey T.S."/>
            <person name="Hinrichs A.S."/>
            <person name="Karolchik D."/>
            <person name="Kent W.J."/>
            <person name="Rosenbloom K.R."/>
            <person name="Trumbower H."/>
            <person name="Weirauch M."/>
            <person name="Cooper D.N."/>
            <person name="Stenson P.D."/>
            <person name="Ma B."/>
            <person name="Brent M."/>
            <person name="Arumugam M."/>
            <person name="Shteynberg D."/>
            <person name="Copley R.R."/>
            <person name="Taylor M.S."/>
            <person name="Riethman H."/>
            <person name="Mudunuri U."/>
            <person name="Peterson J."/>
            <person name="Guyer M."/>
            <person name="Felsenfeld A."/>
            <person name="Old S."/>
            <person name="Mockrin S."/>
            <person name="Collins F.S."/>
        </authorList>
    </citation>
    <scope>NUCLEOTIDE SEQUENCE [LARGE SCALE GENOMIC DNA]</scope>
    <source>
        <strain evidence="12">Brown Norway</strain>
    </source>
</reference>
<reference evidence="9" key="3">
    <citation type="journal article" date="2004" name="Genome Res.">
        <title>The status, quality, and expansion of the NIH full-length cDNA project: the Mammalian Gene Collection (MGC).</title>
        <authorList>
            <consortium name="The MGC Project Team"/>
        </authorList>
    </citation>
    <scope>NUCLEOTIDE SEQUENCE [LARGE SCALE MRNA]</scope>
    <source>
        <tissue evidence="9">Brain</tissue>
    </source>
</reference>
<reference evidence="11" key="4">
    <citation type="journal article" date="2003" name="FASEB J.">
        <title>A reticular rhapsody: phylogenic evolution and nomenclature of the RTN/Nogo gene family.</title>
        <authorList>
            <person name="Oertle T."/>
            <person name="Klinger M."/>
            <person name="Stuermer C.A.O."/>
            <person name="Schwab M.E."/>
        </authorList>
    </citation>
    <scope>IDENTIFICATION</scope>
</reference>
<reference evidence="14" key="5">
    <citation type="journal article" date="2012" name="Nat. Commun.">
        <title>Quantitative maps of protein phosphorylation sites across 14 different rat organs and tissues.</title>
        <authorList>
            <person name="Lundby A."/>
            <person name="Secher A."/>
            <person name="Lage K."/>
            <person name="Nordsborg N.B."/>
            <person name="Dmytriyev A."/>
            <person name="Lundby C."/>
            <person name="Olsen J.V."/>
        </authorList>
    </citation>
    <scope>IDENTIFICATION BY MASS SPECTROMETRY [LARGE SCALE ANALYSIS]</scope>
</reference>
<reference evidence="8" key="6">
    <citation type="journal article" date="2008" name="J. Biol. Chem.">
        <title>Reticulon RTN2B regulates trafficking and function of neuronal glutamate transporter EAAC1.</title>
        <authorList>
            <person name="Liu Y."/>
            <person name="Vidensky S."/>
            <person name="Ruggiero A.M."/>
            <person name="Maier S."/>
            <person name="Sitte H.H."/>
            <person name="Rothstein J.D."/>
        </authorList>
    </citation>
    <scope>FUNCTION</scope>
    <scope>INTERACTION WITH ARL6IP5 AND SLC1A1</scope>
    <scope>SUBCELLULAR LOCATION</scope>
    <scope>TISSUE SPECIFICITY</scope>
</reference>
<proteinExistence type="evidence at protein level"/>
<keyword id="KW-1003">Cell membrane</keyword>
<keyword id="KW-0963">Cytoplasm</keyword>
<keyword id="KW-0206">Cytoskeleton</keyword>
<keyword id="KW-0256">Endoplasmic reticulum</keyword>
<keyword id="KW-0472">Membrane</keyword>
<keyword id="KW-0597">Phosphoprotein</keyword>
<keyword id="KW-1185">Reference proteome</keyword>
<keyword id="KW-0703">Sarcoplasmic reticulum</keyword>
<keyword id="KW-0812">Transmembrane</keyword>
<keyword id="KW-1133">Transmembrane helix</keyword>